<dbReference type="EMBL" id="AM286415">
    <property type="protein sequence ID" value="CAL12265.1"/>
    <property type="molecule type" value="Genomic_DNA"/>
</dbReference>
<dbReference type="RefSeq" id="WP_011816398.1">
    <property type="nucleotide sequence ID" value="NC_008800.1"/>
</dbReference>
<dbReference type="RefSeq" id="YP_001006435.1">
    <property type="nucleotide sequence ID" value="NC_008800.1"/>
</dbReference>
<dbReference type="SMR" id="A1JPQ9"/>
<dbReference type="KEGG" id="yen:YE2195"/>
<dbReference type="PATRIC" id="fig|393305.7.peg.2360"/>
<dbReference type="eggNOG" id="COG4139">
    <property type="taxonomic scope" value="Bacteria"/>
</dbReference>
<dbReference type="HOGENOM" id="CLU_013016_0_3_6"/>
<dbReference type="OrthoDB" id="9055647at2"/>
<dbReference type="Proteomes" id="UP000000642">
    <property type="component" value="Chromosome"/>
</dbReference>
<dbReference type="GO" id="GO:0005886">
    <property type="term" value="C:plasma membrane"/>
    <property type="evidence" value="ECO:0007669"/>
    <property type="project" value="UniProtKB-SubCell"/>
</dbReference>
<dbReference type="GO" id="GO:0090482">
    <property type="term" value="F:vitamin transmembrane transporter activity"/>
    <property type="evidence" value="ECO:0007669"/>
    <property type="project" value="UniProtKB-UniRule"/>
</dbReference>
<dbReference type="GO" id="GO:0015889">
    <property type="term" value="P:cobalamin transport"/>
    <property type="evidence" value="ECO:0007669"/>
    <property type="project" value="UniProtKB-UniRule"/>
</dbReference>
<dbReference type="CDD" id="cd06550">
    <property type="entry name" value="TM_ABC_iron-siderophores_like"/>
    <property type="match status" value="1"/>
</dbReference>
<dbReference type="FunFam" id="1.10.3470.10:FF:000001">
    <property type="entry name" value="Vitamin B12 ABC transporter permease BtuC"/>
    <property type="match status" value="1"/>
</dbReference>
<dbReference type="Gene3D" id="1.10.3470.10">
    <property type="entry name" value="ABC transporter involved in vitamin B12 uptake, BtuC"/>
    <property type="match status" value="1"/>
</dbReference>
<dbReference type="HAMAP" id="MF_01004">
    <property type="entry name" value="BtuC"/>
    <property type="match status" value="1"/>
</dbReference>
<dbReference type="InterPro" id="IPR037294">
    <property type="entry name" value="ABC_BtuC-like"/>
</dbReference>
<dbReference type="InterPro" id="IPR023691">
    <property type="entry name" value="ABC_transptr_BtuC"/>
</dbReference>
<dbReference type="InterPro" id="IPR000522">
    <property type="entry name" value="ABC_transptr_permease_BtuC"/>
</dbReference>
<dbReference type="NCBIfam" id="NF003001">
    <property type="entry name" value="PRK03784.1"/>
    <property type="match status" value="1"/>
</dbReference>
<dbReference type="PANTHER" id="PTHR30472">
    <property type="entry name" value="FERRIC ENTEROBACTIN TRANSPORT SYSTEM PERMEASE PROTEIN"/>
    <property type="match status" value="1"/>
</dbReference>
<dbReference type="PANTHER" id="PTHR30472:SF29">
    <property type="entry name" value="VITAMIN B12 IMPORT SYSTEM PERMEASE PROTEIN BTUC"/>
    <property type="match status" value="1"/>
</dbReference>
<dbReference type="Pfam" id="PF01032">
    <property type="entry name" value="FecCD"/>
    <property type="match status" value="1"/>
</dbReference>
<dbReference type="SUPFAM" id="SSF81345">
    <property type="entry name" value="ABC transporter involved in vitamin B12 uptake, BtuC"/>
    <property type="match status" value="1"/>
</dbReference>
<proteinExistence type="inferred from homology"/>
<keyword id="KW-0997">Cell inner membrane</keyword>
<keyword id="KW-1003">Cell membrane</keyword>
<keyword id="KW-0472">Membrane</keyword>
<keyword id="KW-0812">Transmembrane</keyword>
<keyword id="KW-1133">Transmembrane helix</keyword>
<keyword id="KW-0813">Transport</keyword>
<gene>
    <name evidence="1" type="primary">btuC</name>
    <name type="ordered locus">YE2195</name>
</gene>
<name>BTUC_YERE8</name>
<protein>
    <recommendedName>
        <fullName evidence="1">Vitamin B12 import system permease protein BtuC</fullName>
    </recommendedName>
</protein>
<evidence type="ECO:0000255" key="1">
    <source>
        <dbReference type="HAMAP-Rule" id="MF_01004"/>
    </source>
</evidence>
<feature type="chain" id="PRO_1000062781" description="Vitamin B12 import system permease protein BtuC">
    <location>
        <begin position="1"/>
        <end position="335"/>
    </location>
</feature>
<feature type="transmembrane region" description="Helical" evidence="1">
    <location>
        <begin position="25"/>
        <end position="45"/>
    </location>
</feature>
<feature type="transmembrane region" description="Helical" evidence="1">
    <location>
        <begin position="67"/>
        <end position="87"/>
    </location>
</feature>
<feature type="transmembrane region" description="Helical" evidence="1">
    <location>
        <begin position="95"/>
        <end position="114"/>
    </location>
</feature>
<feature type="transmembrane region" description="Helical" evidence="1">
    <location>
        <begin position="118"/>
        <end position="140"/>
    </location>
</feature>
<feature type="transmembrane region" description="Helical" evidence="1">
    <location>
        <begin position="153"/>
        <end position="173"/>
    </location>
</feature>
<feature type="transmembrane region" description="Helical" evidence="1">
    <location>
        <begin position="200"/>
        <end position="220"/>
    </location>
</feature>
<feature type="transmembrane region" description="Helical" evidence="1">
    <location>
        <begin position="243"/>
        <end position="263"/>
    </location>
</feature>
<feature type="transmembrane region" description="Helical" evidence="1">
    <location>
        <begin position="286"/>
        <end position="306"/>
    </location>
</feature>
<feature type="transmembrane region" description="Helical" evidence="1">
    <location>
        <begin position="308"/>
        <end position="328"/>
    </location>
</feature>
<reference key="1">
    <citation type="journal article" date="2006" name="PLoS Genet.">
        <title>The complete genome sequence and comparative genome analysis of the high pathogenicity Yersinia enterocolitica strain 8081.</title>
        <authorList>
            <person name="Thomson N.R."/>
            <person name="Howard S."/>
            <person name="Wren B.W."/>
            <person name="Holden M.T.G."/>
            <person name="Crossman L."/>
            <person name="Challis G.L."/>
            <person name="Churcher C."/>
            <person name="Mungall K."/>
            <person name="Brooks K."/>
            <person name="Chillingworth T."/>
            <person name="Feltwell T."/>
            <person name="Abdellah Z."/>
            <person name="Hauser H."/>
            <person name="Jagels K."/>
            <person name="Maddison M."/>
            <person name="Moule S."/>
            <person name="Sanders M."/>
            <person name="Whitehead S."/>
            <person name="Quail M.A."/>
            <person name="Dougan G."/>
            <person name="Parkhill J."/>
            <person name="Prentice M.B."/>
        </authorList>
    </citation>
    <scope>NUCLEOTIDE SEQUENCE [LARGE SCALE GENOMIC DNA]</scope>
    <source>
        <strain>NCTC 13174 / 8081</strain>
    </source>
</reference>
<organism>
    <name type="scientific">Yersinia enterocolitica serotype O:8 / biotype 1B (strain NCTC 13174 / 8081)</name>
    <dbReference type="NCBI Taxonomy" id="393305"/>
    <lineage>
        <taxon>Bacteria</taxon>
        <taxon>Pseudomonadati</taxon>
        <taxon>Pseudomonadota</taxon>
        <taxon>Gammaproteobacteria</taxon>
        <taxon>Enterobacterales</taxon>
        <taxon>Yersiniaceae</taxon>
        <taxon>Yersinia</taxon>
    </lineage>
</organism>
<accession>A1JPQ9</accession>
<comment type="function">
    <text evidence="1">Part of the ABC transporter complex BtuCDF involved in vitamin B12 import. Involved in the translocation of the substrate across the membrane.</text>
</comment>
<comment type="subunit">
    <text evidence="1">The complex is composed of two ATP-binding proteins (BtuD), two transmembrane proteins (BtuC) and a solute-binding protein (BtuF).</text>
</comment>
<comment type="subcellular location">
    <subcellularLocation>
        <location evidence="1">Cell inner membrane</location>
        <topology evidence="1">Multi-pass membrane protein</topology>
    </subcellularLocation>
</comment>
<comment type="similarity">
    <text evidence="1">Belongs to the binding-protein-dependent transport system permease family. FecCD subfamily.</text>
</comment>
<sequence length="335" mass="36210">MQTSHLFTALQQRQQQRDNRYLKGLVVILLLSLLISLCAGDIWLWPTQWFSETGRLFVWQLRLPRALAVLMVGASLAVSGAVMQALFENPLAEPGLLGVANGAGVALVMAVLLGHGLLPIWFLSACAIAGALLMTMLLLGFARRRLLTNARLLLVGVALGIVCSAIMTWAVYFSTSLDLRQLMYWMMGGFSGIDWRHQGLVLALLPIVLWLCCQGHVLNFMSLGEQQAQQLGVSLHLWRNLLVLAIGLLVGVSVALAGVISFIGLVIPHILRLTGLTDQRRLLAGCALAGGGILLLADIVARIALFSAELPIGVVTATLGAPLFIWLLTRVKSVK</sequence>